<protein>
    <recommendedName>
        <fullName>Protein OPI10 homolog</fullName>
    </recommendedName>
</protein>
<keyword id="KW-0963">Cytoplasm</keyword>
<keyword id="KW-0539">Nucleus</keyword>
<keyword id="KW-1185">Reference proteome</keyword>
<reference key="1">
    <citation type="journal article" date="2002" name="Nature">
        <title>The genome sequence of Schizosaccharomyces pombe.</title>
        <authorList>
            <person name="Wood V."/>
            <person name="Gwilliam R."/>
            <person name="Rajandream M.A."/>
            <person name="Lyne M.H."/>
            <person name="Lyne R."/>
            <person name="Stewart A."/>
            <person name="Sgouros J.G."/>
            <person name="Peat N."/>
            <person name="Hayles J."/>
            <person name="Baker S.G."/>
            <person name="Basham D."/>
            <person name="Bowman S."/>
            <person name="Brooks K."/>
            <person name="Brown D."/>
            <person name="Brown S."/>
            <person name="Chillingworth T."/>
            <person name="Churcher C.M."/>
            <person name="Collins M."/>
            <person name="Connor R."/>
            <person name="Cronin A."/>
            <person name="Davis P."/>
            <person name="Feltwell T."/>
            <person name="Fraser A."/>
            <person name="Gentles S."/>
            <person name="Goble A."/>
            <person name="Hamlin N."/>
            <person name="Harris D.E."/>
            <person name="Hidalgo J."/>
            <person name="Hodgson G."/>
            <person name="Holroyd S."/>
            <person name="Hornsby T."/>
            <person name="Howarth S."/>
            <person name="Huckle E.J."/>
            <person name="Hunt S."/>
            <person name="Jagels K."/>
            <person name="James K.D."/>
            <person name="Jones L."/>
            <person name="Jones M."/>
            <person name="Leather S."/>
            <person name="McDonald S."/>
            <person name="McLean J."/>
            <person name="Mooney P."/>
            <person name="Moule S."/>
            <person name="Mungall K.L."/>
            <person name="Murphy L.D."/>
            <person name="Niblett D."/>
            <person name="Odell C."/>
            <person name="Oliver K."/>
            <person name="O'Neil S."/>
            <person name="Pearson D."/>
            <person name="Quail M.A."/>
            <person name="Rabbinowitsch E."/>
            <person name="Rutherford K.M."/>
            <person name="Rutter S."/>
            <person name="Saunders D."/>
            <person name="Seeger K."/>
            <person name="Sharp S."/>
            <person name="Skelton J."/>
            <person name="Simmonds M.N."/>
            <person name="Squares R."/>
            <person name="Squares S."/>
            <person name="Stevens K."/>
            <person name="Taylor K."/>
            <person name="Taylor R.G."/>
            <person name="Tivey A."/>
            <person name="Walsh S.V."/>
            <person name="Warren T."/>
            <person name="Whitehead S."/>
            <person name="Woodward J.R."/>
            <person name="Volckaert G."/>
            <person name="Aert R."/>
            <person name="Robben J."/>
            <person name="Grymonprez B."/>
            <person name="Weltjens I."/>
            <person name="Vanstreels E."/>
            <person name="Rieger M."/>
            <person name="Schaefer M."/>
            <person name="Mueller-Auer S."/>
            <person name="Gabel C."/>
            <person name="Fuchs M."/>
            <person name="Duesterhoeft A."/>
            <person name="Fritzc C."/>
            <person name="Holzer E."/>
            <person name="Moestl D."/>
            <person name="Hilbert H."/>
            <person name="Borzym K."/>
            <person name="Langer I."/>
            <person name="Beck A."/>
            <person name="Lehrach H."/>
            <person name="Reinhardt R."/>
            <person name="Pohl T.M."/>
            <person name="Eger P."/>
            <person name="Zimmermann W."/>
            <person name="Wedler H."/>
            <person name="Wambutt R."/>
            <person name="Purnelle B."/>
            <person name="Goffeau A."/>
            <person name="Cadieu E."/>
            <person name="Dreano S."/>
            <person name="Gloux S."/>
            <person name="Lelaure V."/>
            <person name="Mottier S."/>
            <person name="Galibert F."/>
            <person name="Aves S.J."/>
            <person name="Xiang Z."/>
            <person name="Hunt C."/>
            <person name="Moore K."/>
            <person name="Hurst S.M."/>
            <person name="Lucas M."/>
            <person name="Rochet M."/>
            <person name="Gaillardin C."/>
            <person name="Tallada V.A."/>
            <person name="Garzon A."/>
            <person name="Thode G."/>
            <person name="Daga R.R."/>
            <person name="Cruzado L."/>
            <person name="Jimenez J."/>
            <person name="Sanchez M."/>
            <person name="del Rey F."/>
            <person name="Benito J."/>
            <person name="Dominguez A."/>
            <person name="Revuelta J.L."/>
            <person name="Moreno S."/>
            <person name="Armstrong J."/>
            <person name="Forsburg S.L."/>
            <person name="Cerutti L."/>
            <person name="Lowe T."/>
            <person name="McCombie W.R."/>
            <person name="Paulsen I."/>
            <person name="Potashkin J."/>
            <person name="Shpakovski G.V."/>
            <person name="Ussery D."/>
            <person name="Barrell B.G."/>
            <person name="Nurse P."/>
        </authorList>
    </citation>
    <scope>NUCLEOTIDE SEQUENCE [LARGE SCALE GENOMIC DNA]</scope>
    <source>
        <strain>972 / ATCC 24843</strain>
    </source>
</reference>
<reference key="2">
    <citation type="journal article" date="2006" name="Nat. Biotechnol.">
        <title>ORFeome cloning and global analysis of protein localization in the fission yeast Schizosaccharomyces pombe.</title>
        <authorList>
            <person name="Matsuyama A."/>
            <person name="Arai R."/>
            <person name="Yashiroda Y."/>
            <person name="Shirai A."/>
            <person name="Kamata A."/>
            <person name="Sekido S."/>
            <person name="Kobayashi Y."/>
            <person name="Hashimoto A."/>
            <person name="Hamamoto M."/>
            <person name="Hiraoka Y."/>
            <person name="Horinouchi S."/>
            <person name="Yoshida M."/>
        </authorList>
    </citation>
    <scope>SUBCELLULAR LOCATION [LARGE SCALE ANALYSIS]</scope>
</reference>
<sequence length="200" mass="22035">MFGAICAGRLVQTNLQQVADNQFVFQLDSAESLNHIVVFLLPNSPFPVGMGAKVYFQWPGKPFQFLGYLTNEKPSAIFRLKNTIQTLSENENCVGITAMLGISVEPLTNFTETPAVSTSASNVIAKPLPPVTSVAQKILTNLYNFLASFATSQLPPNSIGLGDLRPNDTFIPLRVFQDWHAKFLNKLSNNPNFLDSEDQI</sequence>
<evidence type="ECO:0000269" key="1">
    <source>
    </source>
</evidence>
<evidence type="ECO:0000305" key="2"/>
<dbReference type="EMBL" id="CU329671">
    <property type="protein sequence ID" value="CAA18866.1"/>
    <property type="molecule type" value="Genomic_DNA"/>
</dbReference>
<dbReference type="PIR" id="T39932">
    <property type="entry name" value="T39932"/>
</dbReference>
<dbReference type="SMR" id="O60175"/>
<dbReference type="BioGRID" id="277037">
    <property type="interactions" value="4"/>
</dbReference>
<dbReference type="FunCoup" id="O60175">
    <property type="interactions" value="448"/>
</dbReference>
<dbReference type="IntAct" id="O60175">
    <property type="interactions" value="2"/>
</dbReference>
<dbReference type="MINT" id="O60175"/>
<dbReference type="STRING" id="284812.O60175"/>
<dbReference type="PaxDb" id="4896-SPBC21H7.06c.1"/>
<dbReference type="EnsemblFungi" id="SPBC21H7.06c.1">
    <property type="protein sequence ID" value="SPBC21H7.06c.1:pep"/>
    <property type="gene ID" value="SPBC21H7.06c"/>
</dbReference>
<dbReference type="KEGG" id="spo:2540509"/>
<dbReference type="PomBase" id="SPBC21H7.06c"/>
<dbReference type="VEuPathDB" id="FungiDB:SPBC21H7.06c"/>
<dbReference type="eggNOG" id="KOG4067">
    <property type="taxonomic scope" value="Eukaryota"/>
</dbReference>
<dbReference type="HOGENOM" id="CLU_084839_1_1_1"/>
<dbReference type="InParanoid" id="O60175"/>
<dbReference type="OMA" id="WWAKFER"/>
<dbReference type="PhylomeDB" id="O60175"/>
<dbReference type="Reactome" id="R-SPO-3371453">
    <property type="pathway name" value="Regulation of HSF1-mediated heat shock response"/>
</dbReference>
<dbReference type="PRO" id="PR:O60175"/>
<dbReference type="Proteomes" id="UP000002485">
    <property type="component" value="Chromosome II"/>
</dbReference>
<dbReference type="GO" id="GO:0005829">
    <property type="term" value="C:cytosol"/>
    <property type="evidence" value="ECO:0007005"/>
    <property type="project" value="PomBase"/>
</dbReference>
<dbReference type="GO" id="GO:0005635">
    <property type="term" value="C:nuclear envelope"/>
    <property type="evidence" value="ECO:0000314"/>
    <property type="project" value="PomBase"/>
</dbReference>
<dbReference type="GO" id="GO:0005634">
    <property type="term" value="C:nucleus"/>
    <property type="evidence" value="ECO:0007005"/>
    <property type="project" value="PomBase"/>
</dbReference>
<dbReference type="GO" id="GO:0061608">
    <property type="term" value="F:nuclear import signal receptor activity"/>
    <property type="evidence" value="ECO:0000314"/>
    <property type="project" value="PomBase"/>
</dbReference>
<dbReference type="GO" id="GO:0006606">
    <property type="term" value="P:protein import into nucleus"/>
    <property type="evidence" value="ECO:0000314"/>
    <property type="project" value="PomBase"/>
</dbReference>
<dbReference type="InterPro" id="IPR048364">
    <property type="entry name" value="Hikeshi-like_C"/>
</dbReference>
<dbReference type="InterPro" id="IPR008493">
    <property type="entry name" value="Hikeshi-like_N"/>
</dbReference>
<dbReference type="InterPro" id="IPR031318">
    <property type="entry name" value="OPI10"/>
</dbReference>
<dbReference type="PANTHER" id="PTHR12925">
    <property type="entry name" value="HIKESHI FAMILY MEMBER"/>
    <property type="match status" value="1"/>
</dbReference>
<dbReference type="PANTHER" id="PTHR12925:SF0">
    <property type="entry name" value="PROTEIN HIKESHI"/>
    <property type="match status" value="1"/>
</dbReference>
<dbReference type="Pfam" id="PF21057">
    <property type="entry name" value="Hikeshi-like_C"/>
    <property type="match status" value="1"/>
</dbReference>
<dbReference type="Pfam" id="PF05603">
    <property type="entry name" value="Hikeshi-like_N"/>
    <property type="match status" value="1"/>
</dbReference>
<gene>
    <name type="ORF">SPBC21H7.06c</name>
</gene>
<name>OPI10_SCHPO</name>
<feature type="chain" id="PRO_0000343430" description="Protein OPI10 homolog">
    <location>
        <begin position="1"/>
        <end position="200"/>
    </location>
</feature>
<proteinExistence type="inferred from homology"/>
<organism>
    <name type="scientific">Schizosaccharomyces pombe (strain 972 / ATCC 24843)</name>
    <name type="common">Fission yeast</name>
    <dbReference type="NCBI Taxonomy" id="284812"/>
    <lineage>
        <taxon>Eukaryota</taxon>
        <taxon>Fungi</taxon>
        <taxon>Dikarya</taxon>
        <taxon>Ascomycota</taxon>
        <taxon>Taphrinomycotina</taxon>
        <taxon>Schizosaccharomycetes</taxon>
        <taxon>Schizosaccharomycetales</taxon>
        <taxon>Schizosaccharomycetaceae</taxon>
        <taxon>Schizosaccharomyces</taxon>
    </lineage>
</organism>
<comment type="subcellular location">
    <subcellularLocation>
        <location evidence="1">Cytoplasm</location>
    </subcellularLocation>
    <subcellularLocation>
        <location evidence="1">Nucleus envelope</location>
    </subcellularLocation>
</comment>
<comment type="similarity">
    <text evidence="2">Belongs to the OPI10 family.</text>
</comment>
<accession>O60175</accession>